<keyword id="KW-0002">3D-structure</keyword>
<keyword id="KW-0106">Calcium</keyword>
<keyword id="KW-0455">Luminescence</keyword>
<keyword id="KW-0479">Metal-binding</keyword>
<keyword id="KW-0599">Photoprotein</keyword>
<keyword id="KW-0677">Repeat</keyword>
<proteinExistence type="evidence at protein level"/>
<dbReference type="EMBL" id="U07128">
    <property type="protein sequence ID" value="AAA67708.1"/>
    <property type="molecule type" value="mRNA"/>
</dbReference>
<dbReference type="PDB" id="1EL4">
    <property type="method" value="X-ray"/>
    <property type="resolution" value="1.73 A"/>
    <property type="chains" value="A=1-195"/>
</dbReference>
<dbReference type="PDB" id="1JF0">
    <property type="method" value="X-ray"/>
    <property type="resolution" value="1.82 A"/>
    <property type="chains" value="A=1-195"/>
</dbReference>
<dbReference type="PDB" id="1JF2">
    <property type="method" value="X-ray"/>
    <property type="resolution" value="1.72 A"/>
    <property type="chains" value="A=1-195"/>
</dbReference>
<dbReference type="PDB" id="1QV0">
    <property type="method" value="X-ray"/>
    <property type="resolution" value="1.10 A"/>
    <property type="chains" value="A=1-195"/>
</dbReference>
<dbReference type="PDB" id="1QV1">
    <property type="method" value="X-ray"/>
    <property type="resolution" value="1.10 A"/>
    <property type="chains" value="A=1-195"/>
</dbReference>
<dbReference type="PDB" id="1S36">
    <property type="method" value="X-ray"/>
    <property type="resolution" value="1.96 A"/>
    <property type="chains" value="A=1-195"/>
</dbReference>
<dbReference type="PDB" id="1SL7">
    <property type="method" value="X-ray"/>
    <property type="resolution" value="2.20 A"/>
    <property type="chains" value="A=1-195"/>
</dbReference>
<dbReference type="PDB" id="1SL9">
    <property type="method" value="X-ray"/>
    <property type="resolution" value="1.17 A"/>
    <property type="chains" value="A=1-195"/>
</dbReference>
<dbReference type="PDB" id="2F8P">
    <property type="method" value="X-ray"/>
    <property type="resolution" value="1.93 A"/>
    <property type="chains" value="A=1-195"/>
</dbReference>
<dbReference type="PDB" id="4MRX">
    <property type="method" value="X-ray"/>
    <property type="resolution" value="1.72 A"/>
    <property type="chains" value="A=1-195"/>
</dbReference>
<dbReference type="PDB" id="4MRY">
    <property type="method" value="X-ray"/>
    <property type="resolution" value="1.30 A"/>
    <property type="chains" value="A=1-195"/>
</dbReference>
<dbReference type="PDB" id="4N1F">
    <property type="method" value="X-ray"/>
    <property type="resolution" value="2.09 A"/>
    <property type="chains" value="A=1-195"/>
</dbReference>
<dbReference type="PDB" id="4N1G">
    <property type="method" value="X-ray"/>
    <property type="resolution" value="1.50 A"/>
    <property type="chains" value="A/B=1-195"/>
</dbReference>
<dbReference type="PDB" id="7O3U">
    <property type="method" value="X-ray"/>
    <property type="resolution" value="1.80 A"/>
    <property type="chains" value="A=1-195"/>
</dbReference>
<dbReference type="PDB" id="8A9S">
    <property type="method" value="X-ray"/>
    <property type="resolution" value="2.10 A"/>
    <property type="chains" value="A/B=1-195"/>
</dbReference>
<dbReference type="PDB" id="8C6O">
    <property type="method" value="X-ray"/>
    <property type="resolution" value="2.20 A"/>
    <property type="chains" value="A/B=1-195"/>
</dbReference>
<dbReference type="PDBsum" id="1EL4"/>
<dbReference type="PDBsum" id="1JF0"/>
<dbReference type="PDBsum" id="1JF2"/>
<dbReference type="PDBsum" id="1QV0"/>
<dbReference type="PDBsum" id="1QV1"/>
<dbReference type="PDBsum" id="1S36"/>
<dbReference type="PDBsum" id="1SL7"/>
<dbReference type="PDBsum" id="1SL9"/>
<dbReference type="PDBsum" id="2F8P"/>
<dbReference type="PDBsum" id="4MRX"/>
<dbReference type="PDBsum" id="4MRY"/>
<dbReference type="PDBsum" id="4N1F"/>
<dbReference type="PDBsum" id="4N1G"/>
<dbReference type="PDBsum" id="7O3U"/>
<dbReference type="PDBsum" id="8A9S"/>
<dbReference type="PDBsum" id="8C6O"/>
<dbReference type="SMR" id="Q27709"/>
<dbReference type="MINT" id="Q27709"/>
<dbReference type="BRENDA" id="1.13.12.24">
    <property type="organism ID" value="15411"/>
</dbReference>
<dbReference type="EvolutionaryTrace" id="Q27709"/>
<dbReference type="GO" id="GO:0005509">
    <property type="term" value="F:calcium ion binding"/>
    <property type="evidence" value="ECO:0007669"/>
    <property type="project" value="InterPro"/>
</dbReference>
<dbReference type="GO" id="GO:0008218">
    <property type="term" value="P:bioluminescence"/>
    <property type="evidence" value="ECO:0007669"/>
    <property type="project" value="UniProtKB-KW"/>
</dbReference>
<dbReference type="CDD" id="cd00051">
    <property type="entry name" value="EFh"/>
    <property type="match status" value="1"/>
</dbReference>
<dbReference type="Gene3D" id="1.10.238.10">
    <property type="entry name" value="EF-hand"/>
    <property type="match status" value="1"/>
</dbReference>
<dbReference type="InterPro" id="IPR050145">
    <property type="entry name" value="Centrin_CML-like"/>
</dbReference>
<dbReference type="InterPro" id="IPR011992">
    <property type="entry name" value="EF-hand-dom_pair"/>
</dbReference>
<dbReference type="InterPro" id="IPR018247">
    <property type="entry name" value="EF_Hand_1_Ca_BS"/>
</dbReference>
<dbReference type="InterPro" id="IPR002048">
    <property type="entry name" value="EF_hand_dom"/>
</dbReference>
<dbReference type="PANTHER" id="PTHR23050">
    <property type="entry name" value="CALCIUM BINDING PROTEIN"/>
    <property type="match status" value="1"/>
</dbReference>
<dbReference type="Pfam" id="PF13202">
    <property type="entry name" value="EF-hand_5"/>
    <property type="match status" value="1"/>
</dbReference>
<dbReference type="Pfam" id="PF13499">
    <property type="entry name" value="EF-hand_7"/>
    <property type="match status" value="1"/>
</dbReference>
<dbReference type="SMART" id="SM00054">
    <property type="entry name" value="EFh"/>
    <property type="match status" value="3"/>
</dbReference>
<dbReference type="SUPFAM" id="SSF47473">
    <property type="entry name" value="EF-hand"/>
    <property type="match status" value="1"/>
</dbReference>
<dbReference type="PROSITE" id="PS00018">
    <property type="entry name" value="EF_HAND_1"/>
    <property type="match status" value="3"/>
</dbReference>
<dbReference type="PROSITE" id="PS50222">
    <property type="entry name" value="EF_HAND_2"/>
    <property type="match status" value="3"/>
</dbReference>
<sequence>MSSKYAVKLKTDFDNPRWIKRHKHMFDFLDINGNGKITLDEIVSKASDDICAKLEATPEQTKRHQVCVEAFFRGCGMEYGKEIAFPQFLDGWKQLATSELKKWARNEPTLIREWGDAVFDIFDKDGSGTITLDEWKAYGKISGISPSQEDCEATFRHCDLDNSGDLDVDEMTRQHLGFWYTLDPEADGLYGNGVP</sequence>
<feature type="propeptide" id="PRO_0000004136" evidence="2">
    <location>
        <begin position="1"/>
        <end position="6"/>
    </location>
</feature>
<feature type="chain" id="PRO_0000004137" description="Obelin">
    <location>
        <begin position="7"/>
        <end position="195"/>
    </location>
</feature>
<feature type="domain" description="EF-hand 1" evidence="3">
    <location>
        <begin position="17"/>
        <end position="52"/>
    </location>
</feature>
<feature type="domain" description="EF-hand 2" evidence="1">
    <location>
        <begin position="53"/>
        <end position="88"/>
    </location>
</feature>
<feature type="domain" description="EF-hand 3" evidence="3">
    <location>
        <begin position="110"/>
        <end position="145"/>
    </location>
</feature>
<feature type="domain" description="EF-hand 4" evidence="3">
    <location>
        <begin position="146"/>
        <end position="181"/>
    </location>
</feature>
<feature type="binding site" evidence="3">
    <location>
        <position position="30"/>
    </location>
    <ligand>
        <name>Ca(2+)</name>
        <dbReference type="ChEBI" id="CHEBI:29108"/>
        <label>1</label>
    </ligand>
</feature>
<feature type="binding site" evidence="3">
    <location>
        <position position="32"/>
    </location>
    <ligand>
        <name>Ca(2+)</name>
        <dbReference type="ChEBI" id="CHEBI:29108"/>
        <label>1</label>
    </ligand>
</feature>
<feature type="binding site" evidence="3">
    <location>
        <position position="34"/>
    </location>
    <ligand>
        <name>Ca(2+)</name>
        <dbReference type="ChEBI" id="CHEBI:29108"/>
        <label>1</label>
    </ligand>
</feature>
<feature type="binding site" evidence="3">
    <location>
        <position position="36"/>
    </location>
    <ligand>
        <name>Ca(2+)</name>
        <dbReference type="ChEBI" id="CHEBI:29108"/>
        <label>1</label>
    </ligand>
</feature>
<feature type="binding site" evidence="3">
    <location>
        <position position="41"/>
    </location>
    <ligand>
        <name>Ca(2+)</name>
        <dbReference type="ChEBI" id="CHEBI:29108"/>
        <label>1</label>
    </ligand>
</feature>
<feature type="binding site" evidence="3">
    <location>
        <position position="123"/>
    </location>
    <ligand>
        <name>Ca(2+)</name>
        <dbReference type="ChEBI" id="CHEBI:29108"/>
        <label>2</label>
    </ligand>
</feature>
<feature type="binding site" evidence="3">
    <location>
        <position position="125"/>
    </location>
    <ligand>
        <name>Ca(2+)</name>
        <dbReference type="ChEBI" id="CHEBI:29108"/>
        <label>2</label>
    </ligand>
</feature>
<feature type="binding site" evidence="3">
    <location>
        <position position="127"/>
    </location>
    <ligand>
        <name>Ca(2+)</name>
        <dbReference type="ChEBI" id="CHEBI:29108"/>
        <label>2</label>
    </ligand>
</feature>
<feature type="binding site" evidence="3">
    <location>
        <position position="129"/>
    </location>
    <ligand>
        <name>Ca(2+)</name>
        <dbReference type="ChEBI" id="CHEBI:29108"/>
        <label>2</label>
    </ligand>
</feature>
<feature type="binding site" evidence="3">
    <location>
        <position position="134"/>
    </location>
    <ligand>
        <name>Ca(2+)</name>
        <dbReference type="ChEBI" id="CHEBI:29108"/>
        <label>2</label>
    </ligand>
</feature>
<feature type="binding site" evidence="3">
    <location>
        <position position="159"/>
    </location>
    <ligand>
        <name>Ca(2+)</name>
        <dbReference type="ChEBI" id="CHEBI:29108"/>
        <label>3</label>
    </ligand>
</feature>
<feature type="binding site" evidence="3">
    <location>
        <position position="161"/>
    </location>
    <ligand>
        <name>Ca(2+)</name>
        <dbReference type="ChEBI" id="CHEBI:29108"/>
        <label>3</label>
    </ligand>
</feature>
<feature type="binding site" evidence="3">
    <location>
        <position position="163"/>
    </location>
    <ligand>
        <name>Ca(2+)</name>
        <dbReference type="ChEBI" id="CHEBI:29108"/>
        <label>3</label>
    </ligand>
</feature>
<feature type="binding site" evidence="3">
    <location>
        <position position="165"/>
    </location>
    <ligand>
        <name>Ca(2+)</name>
        <dbReference type="ChEBI" id="CHEBI:29108"/>
        <label>3</label>
    </ligand>
</feature>
<feature type="binding site" evidence="3">
    <location>
        <position position="170"/>
    </location>
    <ligand>
        <name>Ca(2+)</name>
        <dbReference type="ChEBI" id="CHEBI:29108"/>
        <label>3</label>
    </ligand>
</feature>
<feature type="mutagenesis site" description="Shifts luminescence to violet by adding a new band at 410 nm." evidence="4">
    <original>W</original>
    <variation>F</variation>
    <location>
        <position position="92"/>
    </location>
</feature>
<feature type="helix" evidence="9">
    <location>
        <begin position="3"/>
        <end position="5"/>
    </location>
</feature>
<feature type="strand" evidence="11">
    <location>
        <begin position="6"/>
        <end position="8"/>
    </location>
</feature>
<feature type="helix" evidence="6">
    <location>
        <begin position="16"/>
        <end position="29"/>
    </location>
</feature>
<feature type="strand" evidence="7">
    <location>
        <begin position="33"/>
        <end position="35"/>
    </location>
</feature>
<feature type="helix" evidence="6">
    <location>
        <begin position="39"/>
        <end position="48"/>
    </location>
</feature>
<feature type="helix" evidence="6">
    <location>
        <begin position="50"/>
        <end position="53"/>
    </location>
</feature>
<feature type="helix" evidence="6">
    <location>
        <begin position="58"/>
        <end position="74"/>
    </location>
</feature>
<feature type="strand" evidence="10">
    <location>
        <begin position="82"/>
        <end position="84"/>
    </location>
</feature>
<feature type="helix" evidence="6">
    <location>
        <begin position="85"/>
        <end position="104"/>
    </location>
</feature>
<feature type="helix" evidence="6">
    <location>
        <begin position="110"/>
        <end position="121"/>
    </location>
</feature>
<feature type="strand" evidence="8">
    <location>
        <begin position="125"/>
        <end position="131"/>
    </location>
</feature>
<feature type="helix" evidence="6">
    <location>
        <begin position="132"/>
        <end position="142"/>
    </location>
</feature>
<feature type="strand" evidence="9">
    <location>
        <begin position="143"/>
        <end position="145"/>
    </location>
</feature>
<feature type="helix" evidence="6">
    <location>
        <begin position="148"/>
        <end position="157"/>
    </location>
</feature>
<feature type="strand" evidence="8">
    <location>
        <begin position="164"/>
        <end position="166"/>
    </location>
</feature>
<feature type="helix" evidence="6">
    <location>
        <begin position="168"/>
        <end position="179"/>
    </location>
</feature>
<feature type="helix" evidence="6">
    <location>
        <begin position="184"/>
        <end position="186"/>
    </location>
</feature>
<feature type="turn" evidence="6">
    <location>
        <begin position="187"/>
        <end position="192"/>
    </location>
</feature>
<comment type="function">
    <text>Ca(2+)-dependent bioluminescence photoprotein. Displays an emission peak at 470 nm (blue light). Trace amounts of calcium ion trigger the intramolecular oxidation of the chromophore, coelenterazine into coelenteramide and CO(2) with the concomitant emission of light.</text>
</comment>
<comment type="similarity">
    <text evidence="5">Belongs to the aequorin family.</text>
</comment>
<accession>Q27709</accession>
<name>OBL_OBELO</name>
<evidence type="ECO:0000250" key="1">
    <source>
        <dbReference type="UniProtKB" id="P02592"/>
    </source>
</evidence>
<evidence type="ECO:0000255" key="2"/>
<evidence type="ECO:0000255" key="3">
    <source>
        <dbReference type="PROSITE-ProRule" id="PRU00448"/>
    </source>
</evidence>
<evidence type="ECO:0000269" key="4">
    <source>
    </source>
</evidence>
<evidence type="ECO:0000305" key="5"/>
<evidence type="ECO:0007829" key="6">
    <source>
        <dbReference type="PDB" id="1QV0"/>
    </source>
</evidence>
<evidence type="ECO:0007829" key="7">
    <source>
        <dbReference type="PDB" id="1SL9"/>
    </source>
</evidence>
<evidence type="ECO:0007829" key="8">
    <source>
        <dbReference type="PDB" id="4MRY"/>
    </source>
</evidence>
<evidence type="ECO:0007829" key="9">
    <source>
        <dbReference type="PDB" id="4N1G"/>
    </source>
</evidence>
<evidence type="ECO:0007829" key="10">
    <source>
        <dbReference type="PDB" id="7O3U"/>
    </source>
</evidence>
<evidence type="ECO:0007829" key="11">
    <source>
        <dbReference type="PDB" id="8A9S"/>
    </source>
</evidence>
<protein>
    <recommendedName>
        <fullName>Obelin</fullName>
        <shortName>OBL</shortName>
    </recommendedName>
</protein>
<reference key="1">
    <citation type="journal article" date="1995" name="Gene">
        <title>Sequence of the cDNA encoding the Ca(2+)-activated photoprotein obelin from the hydroid polyp Obelia longissima.</title>
        <authorList>
            <person name="Illarionov B.A."/>
            <person name="Bondar V.S."/>
            <person name="Illarionova V.A."/>
            <person name="Vysotski E.S."/>
        </authorList>
    </citation>
    <scope>NUCLEOTIDE SEQUENCE [MRNA]</scope>
</reference>
<reference key="2">
    <citation type="journal article" date="2000" name="Protein Sci.">
        <title>Structure of the Ca2+-regulated photoprotein obelin at 1.7 A resolution determined directly from its sulfur substructure.</title>
        <authorList>
            <person name="Liu Z.J."/>
            <person name="Vysotski E.S."/>
            <person name="Chen C.J."/>
            <person name="Rose J.P."/>
            <person name="Lee J."/>
            <person name="Wang B.C."/>
        </authorList>
    </citation>
    <scope>X-RAY CRYSTALLOGRAPHY (1.73 ANGSTROMS)</scope>
</reference>
<reference key="3">
    <citation type="journal article" date="2003" name="Biochem. Biophys. Res. Commun.">
        <title>Atomic resolution structure of obelin: soaking with calcium enhances electron density of the second oxygen atom substituted at the C2-position of coelenterazine.</title>
        <authorList>
            <person name="Liu Z.J."/>
            <person name="Vysotski E.S."/>
            <person name="Deng L."/>
            <person name="Lee J."/>
            <person name="Rose J."/>
            <person name="Wang B.C."/>
        </authorList>
    </citation>
    <scope>X-RAY CRYSTALLOGRAPHY (1.1 ANGSTROMS)</scope>
</reference>
<reference key="4">
    <citation type="journal article" date="2004" name="J. Biol. Chem.">
        <title>Crystal structure of a Ca2+-discharged photoprotein: implications for mechanisms of the calcium trigger and bioluminescence.</title>
        <authorList>
            <person name="Deng L."/>
            <person name="Markova S.V."/>
            <person name="Vysotski E.S."/>
            <person name="Liu Z.J."/>
            <person name="Lee J."/>
            <person name="Rose J."/>
            <person name="Wang B.C."/>
        </authorList>
    </citation>
    <scope>X-RAY CRYSTALLOGRAPHY (1.96 ANGSTROMS)</scope>
    <scope>MUTAGENESIS OF TRP-92</scope>
</reference>
<organism>
    <name type="scientific">Obelia longissima</name>
    <name type="common">Black sea hydrozoan</name>
    <name type="synonym">Laomedea longissima</name>
    <dbReference type="NCBI Taxonomy" id="32570"/>
    <lineage>
        <taxon>Eukaryota</taxon>
        <taxon>Metazoa</taxon>
        <taxon>Cnidaria</taxon>
        <taxon>Hydrozoa</taxon>
        <taxon>Hydroidolina</taxon>
        <taxon>Leptothecata</taxon>
        <taxon>Obeliida</taxon>
        <taxon>Obeliidae</taxon>
        <taxon>Obelia</taxon>
    </lineage>
</organism>